<feature type="chain" id="PRO_1000091928" description="DNA-directed RNA polymerase subunit alpha">
    <location>
        <begin position="1"/>
        <end position="325"/>
    </location>
</feature>
<feature type="region of interest" description="Alpha N-terminal domain (alpha-NTD)" evidence="1">
    <location>
        <begin position="1"/>
        <end position="231"/>
    </location>
</feature>
<feature type="region of interest" description="Alpha C-terminal domain (alpha-CTD)" evidence="1">
    <location>
        <begin position="246"/>
        <end position="325"/>
    </location>
</feature>
<protein>
    <recommendedName>
        <fullName evidence="1">DNA-directed RNA polymerase subunit alpha</fullName>
        <shortName evidence="1">RNAP subunit alpha</shortName>
        <ecNumber evidence="1">2.7.7.6</ecNumber>
    </recommendedName>
    <alternativeName>
        <fullName evidence="1">RNA polymerase subunit alpha</fullName>
    </alternativeName>
    <alternativeName>
        <fullName evidence="1">Transcriptase subunit alpha</fullName>
    </alternativeName>
</protein>
<accession>A9ADL9</accession>
<reference key="1">
    <citation type="submission" date="2007-10" db="EMBL/GenBank/DDBJ databases">
        <title>Complete sequence of chromosome 1 of Burkholderia multivorans ATCC 17616.</title>
        <authorList>
            <person name="Copeland A."/>
            <person name="Lucas S."/>
            <person name="Lapidus A."/>
            <person name="Barry K."/>
            <person name="Glavina del Rio T."/>
            <person name="Dalin E."/>
            <person name="Tice H."/>
            <person name="Pitluck S."/>
            <person name="Chain P."/>
            <person name="Malfatti S."/>
            <person name="Shin M."/>
            <person name="Vergez L."/>
            <person name="Schmutz J."/>
            <person name="Larimer F."/>
            <person name="Land M."/>
            <person name="Hauser L."/>
            <person name="Kyrpides N."/>
            <person name="Kim E."/>
            <person name="Tiedje J."/>
            <person name="Richardson P."/>
        </authorList>
    </citation>
    <scope>NUCLEOTIDE SEQUENCE [LARGE SCALE GENOMIC DNA]</scope>
    <source>
        <strain>ATCC 17616 / 249</strain>
    </source>
</reference>
<reference key="2">
    <citation type="submission" date="2007-04" db="EMBL/GenBank/DDBJ databases">
        <title>Complete genome sequence of Burkholderia multivorans ATCC 17616.</title>
        <authorList>
            <person name="Ohtsubo Y."/>
            <person name="Yamashita A."/>
            <person name="Kurokawa K."/>
            <person name="Takami H."/>
            <person name="Yuhara S."/>
            <person name="Nishiyama E."/>
            <person name="Endo R."/>
            <person name="Miyazaki R."/>
            <person name="Ono A."/>
            <person name="Yano K."/>
            <person name="Ito M."/>
            <person name="Sota M."/>
            <person name="Yuji N."/>
            <person name="Hattori M."/>
            <person name="Tsuda M."/>
        </authorList>
    </citation>
    <scope>NUCLEOTIDE SEQUENCE [LARGE SCALE GENOMIC DNA]</scope>
    <source>
        <strain>ATCC 17616 / 249</strain>
    </source>
</reference>
<sequence length="325" mass="35670">MQTSLLKPKIIAVESLGENHAKVVMEPFERGYGHTLGNALRRVLLSSMVGYAPTEVTIAGVVHEYSTLDGVQEDVVNLLLNLKGVVFKLHNRDEVTVTLRKEGEGVVTAGDIELAHDCEVINPDHVIAHLSKGGKLDVQIKVEKGRGYVPGNVRRYGEDTAKIIGRIVLDASFSPVRRVSYAVESARVEQRTDLDKLVMNIETTGVITPEEAIRQSARILVDQLSVFAALEGTETAAEAPSRAPQIDPILLRPVDDLELTVRSANCLKAENIYYIGDLIQRTENELLKTPNLGRKSLNEIKEVLASRGLTLGMKLENWPPAGLDK</sequence>
<gene>
    <name evidence="1" type="primary">rpoA</name>
    <name type="ordered locus">Bmul_0275</name>
    <name type="ordered locus">BMULJ_02979</name>
</gene>
<name>RPOA_BURM1</name>
<dbReference type="EC" id="2.7.7.6" evidence="1"/>
<dbReference type="EMBL" id="CP000868">
    <property type="protein sequence ID" value="ABX13970.1"/>
    <property type="molecule type" value="Genomic_DNA"/>
</dbReference>
<dbReference type="EMBL" id="AP009385">
    <property type="protein sequence ID" value="BAG44864.1"/>
    <property type="molecule type" value="Genomic_DNA"/>
</dbReference>
<dbReference type="RefSeq" id="WP_006400639.1">
    <property type="nucleotide sequence ID" value="NC_010804.1"/>
</dbReference>
<dbReference type="SMR" id="A9ADL9"/>
<dbReference type="STRING" id="395019.BMULJ_02979"/>
<dbReference type="KEGG" id="bmj:BMULJ_02979"/>
<dbReference type="KEGG" id="bmu:Bmul_0275"/>
<dbReference type="eggNOG" id="COG0202">
    <property type="taxonomic scope" value="Bacteria"/>
</dbReference>
<dbReference type="HOGENOM" id="CLU_053084_0_0_4"/>
<dbReference type="Proteomes" id="UP000008815">
    <property type="component" value="Chromosome 1"/>
</dbReference>
<dbReference type="GO" id="GO:0005737">
    <property type="term" value="C:cytoplasm"/>
    <property type="evidence" value="ECO:0007669"/>
    <property type="project" value="UniProtKB-ARBA"/>
</dbReference>
<dbReference type="GO" id="GO:0000428">
    <property type="term" value="C:DNA-directed RNA polymerase complex"/>
    <property type="evidence" value="ECO:0007669"/>
    <property type="project" value="UniProtKB-KW"/>
</dbReference>
<dbReference type="GO" id="GO:0003677">
    <property type="term" value="F:DNA binding"/>
    <property type="evidence" value="ECO:0007669"/>
    <property type="project" value="UniProtKB-UniRule"/>
</dbReference>
<dbReference type="GO" id="GO:0003899">
    <property type="term" value="F:DNA-directed RNA polymerase activity"/>
    <property type="evidence" value="ECO:0007669"/>
    <property type="project" value="UniProtKB-UniRule"/>
</dbReference>
<dbReference type="GO" id="GO:0046983">
    <property type="term" value="F:protein dimerization activity"/>
    <property type="evidence" value="ECO:0007669"/>
    <property type="project" value="InterPro"/>
</dbReference>
<dbReference type="GO" id="GO:0006351">
    <property type="term" value="P:DNA-templated transcription"/>
    <property type="evidence" value="ECO:0007669"/>
    <property type="project" value="UniProtKB-UniRule"/>
</dbReference>
<dbReference type="CDD" id="cd06928">
    <property type="entry name" value="RNAP_alpha_NTD"/>
    <property type="match status" value="1"/>
</dbReference>
<dbReference type="FunFam" id="1.10.150.20:FF:000001">
    <property type="entry name" value="DNA-directed RNA polymerase subunit alpha"/>
    <property type="match status" value="1"/>
</dbReference>
<dbReference type="FunFam" id="2.170.120.12:FF:000001">
    <property type="entry name" value="DNA-directed RNA polymerase subunit alpha"/>
    <property type="match status" value="1"/>
</dbReference>
<dbReference type="Gene3D" id="1.10.150.20">
    <property type="entry name" value="5' to 3' exonuclease, C-terminal subdomain"/>
    <property type="match status" value="1"/>
</dbReference>
<dbReference type="Gene3D" id="2.170.120.12">
    <property type="entry name" value="DNA-directed RNA polymerase, insert domain"/>
    <property type="match status" value="1"/>
</dbReference>
<dbReference type="Gene3D" id="3.30.1360.10">
    <property type="entry name" value="RNA polymerase, RBP11-like subunit"/>
    <property type="match status" value="1"/>
</dbReference>
<dbReference type="HAMAP" id="MF_00059">
    <property type="entry name" value="RNApol_bact_RpoA"/>
    <property type="match status" value="1"/>
</dbReference>
<dbReference type="InterPro" id="IPR011262">
    <property type="entry name" value="DNA-dir_RNA_pol_insert"/>
</dbReference>
<dbReference type="InterPro" id="IPR011263">
    <property type="entry name" value="DNA-dir_RNA_pol_RpoA/D/Rpb3"/>
</dbReference>
<dbReference type="InterPro" id="IPR011773">
    <property type="entry name" value="DNA-dir_RpoA"/>
</dbReference>
<dbReference type="InterPro" id="IPR036603">
    <property type="entry name" value="RBP11-like"/>
</dbReference>
<dbReference type="InterPro" id="IPR011260">
    <property type="entry name" value="RNAP_asu_C"/>
</dbReference>
<dbReference type="InterPro" id="IPR036643">
    <property type="entry name" value="RNApol_insert_sf"/>
</dbReference>
<dbReference type="NCBIfam" id="NF003513">
    <property type="entry name" value="PRK05182.1-2"/>
    <property type="match status" value="1"/>
</dbReference>
<dbReference type="NCBIfam" id="NF003519">
    <property type="entry name" value="PRK05182.2-5"/>
    <property type="match status" value="1"/>
</dbReference>
<dbReference type="NCBIfam" id="TIGR02027">
    <property type="entry name" value="rpoA"/>
    <property type="match status" value="1"/>
</dbReference>
<dbReference type="Pfam" id="PF01000">
    <property type="entry name" value="RNA_pol_A_bac"/>
    <property type="match status" value="1"/>
</dbReference>
<dbReference type="Pfam" id="PF03118">
    <property type="entry name" value="RNA_pol_A_CTD"/>
    <property type="match status" value="1"/>
</dbReference>
<dbReference type="Pfam" id="PF01193">
    <property type="entry name" value="RNA_pol_L"/>
    <property type="match status" value="1"/>
</dbReference>
<dbReference type="SMART" id="SM00662">
    <property type="entry name" value="RPOLD"/>
    <property type="match status" value="1"/>
</dbReference>
<dbReference type="SUPFAM" id="SSF47789">
    <property type="entry name" value="C-terminal domain of RNA polymerase alpha subunit"/>
    <property type="match status" value="1"/>
</dbReference>
<dbReference type="SUPFAM" id="SSF56553">
    <property type="entry name" value="Insert subdomain of RNA polymerase alpha subunit"/>
    <property type="match status" value="1"/>
</dbReference>
<dbReference type="SUPFAM" id="SSF55257">
    <property type="entry name" value="RBP11-like subunits of RNA polymerase"/>
    <property type="match status" value="1"/>
</dbReference>
<proteinExistence type="inferred from homology"/>
<organism>
    <name type="scientific">Burkholderia multivorans (strain ATCC 17616 / 249)</name>
    <dbReference type="NCBI Taxonomy" id="395019"/>
    <lineage>
        <taxon>Bacteria</taxon>
        <taxon>Pseudomonadati</taxon>
        <taxon>Pseudomonadota</taxon>
        <taxon>Betaproteobacteria</taxon>
        <taxon>Burkholderiales</taxon>
        <taxon>Burkholderiaceae</taxon>
        <taxon>Burkholderia</taxon>
        <taxon>Burkholderia cepacia complex</taxon>
    </lineage>
</organism>
<comment type="function">
    <text evidence="1">DNA-dependent RNA polymerase catalyzes the transcription of DNA into RNA using the four ribonucleoside triphosphates as substrates.</text>
</comment>
<comment type="catalytic activity">
    <reaction evidence="1">
        <text>RNA(n) + a ribonucleoside 5'-triphosphate = RNA(n+1) + diphosphate</text>
        <dbReference type="Rhea" id="RHEA:21248"/>
        <dbReference type="Rhea" id="RHEA-COMP:14527"/>
        <dbReference type="Rhea" id="RHEA-COMP:17342"/>
        <dbReference type="ChEBI" id="CHEBI:33019"/>
        <dbReference type="ChEBI" id="CHEBI:61557"/>
        <dbReference type="ChEBI" id="CHEBI:140395"/>
        <dbReference type="EC" id="2.7.7.6"/>
    </reaction>
</comment>
<comment type="subunit">
    <text evidence="1">Homodimer. The RNAP catalytic core consists of 2 alpha, 1 beta, 1 beta' and 1 omega subunit. When a sigma factor is associated with the core the holoenzyme is formed, which can initiate transcription.</text>
</comment>
<comment type="domain">
    <text evidence="1">The N-terminal domain is essential for RNAP assembly and basal transcription, whereas the C-terminal domain is involved in interaction with transcriptional regulators and with upstream promoter elements.</text>
</comment>
<comment type="similarity">
    <text evidence="1">Belongs to the RNA polymerase alpha chain family.</text>
</comment>
<evidence type="ECO:0000255" key="1">
    <source>
        <dbReference type="HAMAP-Rule" id="MF_00059"/>
    </source>
</evidence>
<keyword id="KW-0240">DNA-directed RNA polymerase</keyword>
<keyword id="KW-0548">Nucleotidyltransferase</keyword>
<keyword id="KW-1185">Reference proteome</keyword>
<keyword id="KW-0804">Transcription</keyword>
<keyword id="KW-0808">Transferase</keyword>